<organism>
    <name type="scientific">Coprothermobacter proteolyticus (strain ATCC 35245 / DSM 5265 / OCM 4 / BT)</name>
    <dbReference type="NCBI Taxonomy" id="309798"/>
    <lineage>
        <taxon>Bacteria</taxon>
        <taxon>Pseudomonadati</taxon>
        <taxon>Coprothermobacterota</taxon>
        <taxon>Coprothermobacteria</taxon>
        <taxon>Coprothermobacterales</taxon>
        <taxon>Coprothermobacteraceae</taxon>
        <taxon>Coprothermobacter</taxon>
    </lineage>
</organism>
<name>Y1186_COPPD</name>
<reference key="1">
    <citation type="submission" date="2008-08" db="EMBL/GenBank/DDBJ databases">
        <title>The complete genome sequence of Coprothermobacter proteolyticus strain ATCC 5245 / DSM 5265 / BT.</title>
        <authorList>
            <person name="Dodson R.J."/>
            <person name="Durkin A.S."/>
            <person name="Wu M."/>
            <person name="Eisen J."/>
            <person name="Sutton G."/>
        </authorList>
    </citation>
    <scope>NUCLEOTIDE SEQUENCE [LARGE SCALE GENOMIC DNA]</scope>
    <source>
        <strain>ATCC 35245 / DSM 5265 / OCM 4 / BT</strain>
    </source>
</reference>
<evidence type="ECO:0000255" key="1">
    <source>
        <dbReference type="HAMAP-Rule" id="MF_01503"/>
    </source>
</evidence>
<evidence type="ECO:0000256" key="2">
    <source>
        <dbReference type="SAM" id="MobiDB-lite"/>
    </source>
</evidence>
<feature type="chain" id="PRO_0000373780" description="Putative regulatory protein COPRO5265_1186">
    <location>
        <begin position="1"/>
        <end position="105"/>
    </location>
</feature>
<feature type="region of interest" description="Disordered" evidence="2">
    <location>
        <begin position="76"/>
        <end position="105"/>
    </location>
</feature>
<feature type="compositionally biased region" description="Acidic residues" evidence="2">
    <location>
        <begin position="78"/>
        <end position="105"/>
    </location>
</feature>
<comment type="similarity">
    <text evidence="1">Belongs to the RemA family.</text>
</comment>
<dbReference type="EMBL" id="CP001145">
    <property type="protein sequence ID" value="ACI17847.1"/>
    <property type="molecule type" value="Genomic_DNA"/>
</dbReference>
<dbReference type="RefSeq" id="WP_012544498.1">
    <property type="nucleotide sequence ID" value="NC_011295.1"/>
</dbReference>
<dbReference type="SMR" id="B5Y9P7"/>
<dbReference type="STRING" id="309798.COPRO5265_1186"/>
<dbReference type="KEGG" id="cpo:COPRO5265_1186"/>
<dbReference type="eggNOG" id="COG2052">
    <property type="taxonomic scope" value="Bacteria"/>
</dbReference>
<dbReference type="HOGENOM" id="CLU_165326_0_0_9"/>
<dbReference type="OrthoDB" id="5432174at2"/>
<dbReference type="Proteomes" id="UP000001732">
    <property type="component" value="Chromosome"/>
</dbReference>
<dbReference type="HAMAP" id="MF_01503">
    <property type="entry name" value="RemA"/>
    <property type="match status" value="1"/>
</dbReference>
<dbReference type="InterPro" id="IPR007169">
    <property type="entry name" value="RemA-like"/>
</dbReference>
<dbReference type="NCBIfam" id="NF003315">
    <property type="entry name" value="PRK04323.1"/>
    <property type="match status" value="1"/>
</dbReference>
<dbReference type="PANTHER" id="PTHR38449:SF1">
    <property type="entry name" value="REGULATORY PROTEIN SSL2874-RELATED"/>
    <property type="match status" value="1"/>
</dbReference>
<dbReference type="PANTHER" id="PTHR38449">
    <property type="entry name" value="REGULATORY PROTEIN TM_1690-RELATED"/>
    <property type="match status" value="1"/>
</dbReference>
<dbReference type="Pfam" id="PF04025">
    <property type="entry name" value="RemA-like"/>
    <property type="match status" value="1"/>
</dbReference>
<keyword id="KW-1185">Reference proteome</keyword>
<accession>B5Y9P7</accession>
<protein>
    <recommendedName>
        <fullName evidence="1">Putative regulatory protein COPRO5265_1186</fullName>
    </recommendedName>
</protein>
<gene>
    <name type="ordered locus">COPRO5265_1186</name>
</gene>
<proteinExistence type="inferred from homology"/>
<sequence>MESGFLNIGFSSYISVSKIIGIVSPDSAPIRRMIRLAKEQGRLVDATFGRRTRAAILTEGGFIVLSAVLPDTLVSRLEEEEEEEERTEPITEQEAELEEESGEDV</sequence>